<comment type="function">
    <text evidence="3">Putative pheromone receptor implicated in the regulation of social and reproductive behavior.</text>
</comment>
<comment type="subcellular location">
    <subcellularLocation>
        <location evidence="4">Cell membrane</location>
        <topology evidence="1">Multi-pass membrane protein</topology>
    </subcellularLocation>
</comment>
<comment type="tissue specificity">
    <text evidence="3">Expressed in a subset of sensory neurons located in the apical layer of the vomeronasal organ.</text>
</comment>
<comment type="disruption phenotype">
    <text evidence="3">Mice lacking all but one V1ra and V1rb gene (12% of the V1r repertoire) show a lack of chemosensory response to a subset of known pheromonal ligands and changes in maternal aggression as well as male reproductive behavior.</text>
</comment>
<comment type="similarity">
    <text evidence="2">Belongs to the G-protein coupled receptor 1 family.</text>
</comment>
<keyword id="KW-1003">Cell membrane</keyword>
<keyword id="KW-1015">Disulfide bond</keyword>
<keyword id="KW-0297">G-protein coupled receptor</keyword>
<keyword id="KW-0325">Glycoprotein</keyword>
<keyword id="KW-0472">Membrane</keyword>
<keyword id="KW-0589">Pheromone response</keyword>
<keyword id="KW-0675">Receptor</keyword>
<keyword id="KW-1185">Reference proteome</keyword>
<keyword id="KW-0807">Transducer</keyword>
<keyword id="KW-0812">Transmembrane</keyword>
<keyword id="KW-1133">Transmembrane helix</keyword>
<name>V1R50_MOUSE</name>
<evidence type="ECO:0000255" key="1"/>
<evidence type="ECO:0000255" key="2">
    <source>
        <dbReference type="PROSITE-ProRule" id="PRU00521"/>
    </source>
</evidence>
<evidence type="ECO:0000269" key="3">
    <source>
    </source>
</evidence>
<evidence type="ECO:0000305" key="4"/>
<evidence type="ECO:0000312" key="5">
    <source>
        <dbReference type="EMBL" id="AAG42083.1"/>
    </source>
</evidence>
<evidence type="ECO:0000312" key="6">
    <source>
        <dbReference type="EMBL" id="AAG43248.1"/>
    </source>
</evidence>
<evidence type="ECO:0000312" key="7">
    <source>
        <dbReference type="EMBL" id="AAI07184.1"/>
    </source>
</evidence>
<evidence type="ECO:0000312" key="8">
    <source>
        <dbReference type="EMBL" id="BAB79219.1"/>
    </source>
</evidence>
<sequence length="310" mass="35195">MSKANLLHTDNNMKITLFSEVSVGISANSILFVVHLCKLLHENKPKPIDLYIAFFSITQLMLLITMGLIAVDMFMPWGRWDSTTCQSLIYLHRLLRGLTFCATCLLNVLWTITLSPRSSCLTKFKHKSPHHISGAFLFFCVLYMSFSSHLLVSIIATFNSTSDNFLYVTQSCSILPVSYSRTSILSTMMTMREAFLIGLMALSSGYVVVLLWRHKKQARHLHSTSLSSKASPEQRATSTIMLLMGFFVVLYILDTVIFQARLKFKDVSTFFCVKIIISHSYATFSPFVFICNDKYMIKFVTSMCGRIVNV</sequence>
<gene>
    <name type="primary">Vmn1r50</name>
    <name evidence="8" type="synonym">V1ra5</name>
    <name type="synonym">V1rb1</name>
</gene>
<reference evidence="5" key="1">
    <citation type="journal article" date="2000" name="Genome Res.">
        <title>Sequence diversity and genomic organization of vomeronasal receptor genes in the mouse.</title>
        <authorList>
            <person name="Del Punta K."/>
            <person name="Rothman A."/>
            <person name="Rodriguez I."/>
            <person name="Mombaerts P."/>
        </authorList>
    </citation>
    <scope>NUCLEOTIDE SEQUENCE [GENOMIC DNA]</scope>
    <source>
        <strain evidence="5">129/SvJ</strain>
    </source>
</reference>
<reference evidence="6" key="2">
    <citation type="journal article" date="2002" name="Proc. Natl. Acad. Sci. U.S.A.">
        <title>Sequence analysis of mouse vomeronasal receptor gene clusters reveals common promoter motifs and a history of recent expansion.</title>
        <authorList>
            <person name="Lane R.P."/>
            <person name="Cutforth T."/>
            <person name="Axel R."/>
            <person name="Hood L."/>
            <person name="Trask B.J."/>
        </authorList>
    </citation>
    <scope>NUCLEOTIDE SEQUENCE [GENOMIC DNA]</scope>
</reference>
<reference evidence="8" key="3">
    <citation type="submission" date="2001-06" db="EMBL/GenBank/DDBJ databases">
        <title>Vomeronasal receptor gene diversity in the mammalian genome.</title>
        <authorList>
            <person name="Sam M."/>
            <person name="Matsunami H."/>
            <person name="Buck L."/>
        </authorList>
    </citation>
    <scope>NUCLEOTIDE SEQUENCE [GENOMIC DNA]</scope>
</reference>
<reference evidence="7" key="4">
    <citation type="journal article" date="2004" name="Genome Res.">
        <title>The status, quality, and expansion of the NIH full-length cDNA project: the Mammalian Gene Collection (MGC).</title>
        <authorList>
            <consortium name="The MGC Project Team"/>
        </authorList>
    </citation>
    <scope>NUCLEOTIDE SEQUENCE [LARGE SCALE MRNA]</scope>
</reference>
<reference evidence="4" key="5">
    <citation type="journal article" date="2002" name="Nature">
        <title>Deficient pheromone responses in mice lacking a cluster of vomeronasal receptor genes.</title>
        <authorList>
            <person name="Del Punta K."/>
            <person name="Leinders-Zufall T."/>
            <person name="Rodriguez I."/>
            <person name="Jukam D."/>
            <person name="Wysocki C.J."/>
            <person name="Ogawa S."/>
            <person name="Zufall F."/>
            <person name="Mombaerts P."/>
        </authorList>
    </citation>
    <scope>PUTATIVE FUNCTION</scope>
    <scope>TISSUE SPECIFICITY</scope>
    <scope>DISRUPTION PHENOTYPE</scope>
</reference>
<feature type="chain" id="PRO_0000239973" description="Vomeronasal type-1 receptor 50">
    <location>
        <begin position="1"/>
        <end position="310"/>
    </location>
</feature>
<feature type="topological domain" description="Extracellular" evidence="1">
    <location>
        <begin position="1"/>
        <end position="16"/>
    </location>
</feature>
<feature type="transmembrane region" description="Helical; Name=1" evidence="1">
    <location>
        <begin position="17"/>
        <end position="37"/>
    </location>
</feature>
<feature type="topological domain" description="Cytoplasmic" evidence="1">
    <location>
        <begin position="38"/>
        <end position="50"/>
    </location>
</feature>
<feature type="transmembrane region" description="Helical; Name=2" evidence="1">
    <location>
        <begin position="51"/>
        <end position="71"/>
    </location>
</feature>
<feature type="topological domain" description="Extracellular" evidence="1">
    <location>
        <begin position="72"/>
        <end position="93"/>
    </location>
</feature>
<feature type="transmembrane region" description="Helical; Name=3" evidence="1">
    <location>
        <begin position="94"/>
        <end position="114"/>
    </location>
</feature>
<feature type="topological domain" description="Cytoplasmic" evidence="1">
    <location>
        <begin position="115"/>
        <end position="134"/>
    </location>
</feature>
<feature type="transmembrane region" description="Helical; Name=4" evidence="1">
    <location>
        <begin position="135"/>
        <end position="155"/>
    </location>
</feature>
<feature type="topological domain" description="Extracellular" evidence="1">
    <location>
        <begin position="156"/>
        <end position="193"/>
    </location>
</feature>
<feature type="transmembrane region" description="Helical; Name=5" evidence="1">
    <location>
        <begin position="194"/>
        <end position="214"/>
    </location>
</feature>
<feature type="topological domain" description="Cytoplasmic" evidence="1">
    <location>
        <begin position="215"/>
        <end position="237"/>
    </location>
</feature>
<feature type="transmembrane region" description="Helical; Name=6" evidence="1">
    <location>
        <begin position="238"/>
        <end position="258"/>
    </location>
</feature>
<feature type="topological domain" description="Extracellular" evidence="1">
    <location>
        <begin position="259"/>
        <end position="269"/>
    </location>
</feature>
<feature type="transmembrane region" description="Helical; Name=7" evidence="1">
    <location>
        <begin position="270"/>
        <end position="290"/>
    </location>
</feature>
<feature type="topological domain" description="Cytoplasmic" evidence="1">
    <location>
        <begin position="291"/>
        <end position="310"/>
    </location>
</feature>
<feature type="glycosylation site" description="N-linked (GlcNAc...) asparagine" evidence="1">
    <location>
        <position position="159"/>
    </location>
</feature>
<feature type="disulfide bond" evidence="2">
    <location>
        <begin position="85"/>
        <end position="172"/>
    </location>
</feature>
<feature type="sequence conflict" description="In Ref. 3; BAB79219." evidence="4" ref="3">
    <original>S</original>
    <variation>N</variation>
    <location>
        <position position="115"/>
    </location>
</feature>
<proteinExistence type="evidence at transcript level"/>
<dbReference type="EMBL" id="AF291489">
    <property type="protein sequence ID" value="AAG42083.1"/>
    <property type="molecule type" value="Genomic_DNA"/>
</dbReference>
<dbReference type="EMBL" id="AF129005">
    <property type="protein sequence ID" value="AAG43248.1"/>
    <property type="molecule type" value="Genomic_DNA"/>
</dbReference>
<dbReference type="EMBL" id="AB062902">
    <property type="protein sequence ID" value="BAB79219.1"/>
    <property type="molecule type" value="Genomic_DNA"/>
</dbReference>
<dbReference type="EMBL" id="BC107183">
    <property type="protein sequence ID" value="AAI07184.1"/>
    <property type="molecule type" value="mRNA"/>
</dbReference>
<dbReference type="CCDS" id="CCDS20352.1"/>
<dbReference type="RefSeq" id="NP_444455.1">
    <property type="nucleotide sequence ID" value="NM_053225.1"/>
</dbReference>
<dbReference type="SMR" id="Q9EP51"/>
<dbReference type="STRING" id="10090.ENSMUSP00000154560"/>
<dbReference type="GlyCosmos" id="Q9EP51">
    <property type="glycosylation" value="1 site, No reported glycans"/>
</dbReference>
<dbReference type="GlyGen" id="Q9EP51">
    <property type="glycosylation" value="1 site"/>
</dbReference>
<dbReference type="iPTMnet" id="Q9EP51"/>
<dbReference type="PhosphoSitePlus" id="Q9EP51"/>
<dbReference type="PaxDb" id="10090-ENSMUSP00000080407"/>
<dbReference type="DNASU" id="113852"/>
<dbReference type="Ensembl" id="ENSMUST00000081706.2">
    <property type="protein sequence ID" value="ENSMUSP00000080407.2"/>
    <property type="gene ID" value="ENSMUSG00000094553.4"/>
</dbReference>
<dbReference type="Ensembl" id="ENSMUST00000089417.8">
    <property type="protein sequence ID" value="ENSMUSP00000100705.4"/>
    <property type="gene ID" value="ENSMUSG00000094553.4"/>
</dbReference>
<dbReference type="Ensembl" id="ENSMUST00000226577.2">
    <property type="protein sequence ID" value="ENSMUSP00000154560.2"/>
    <property type="gene ID" value="ENSMUSG00000094553.4"/>
</dbReference>
<dbReference type="GeneID" id="113852"/>
<dbReference type="KEGG" id="mmu:113852"/>
<dbReference type="UCSC" id="uc009cwu.1">
    <property type="organism name" value="mouse"/>
</dbReference>
<dbReference type="AGR" id="MGI:2148515"/>
<dbReference type="CTD" id="113852"/>
<dbReference type="MGI" id="MGI:2148515">
    <property type="gene designation" value="Vmn1r50"/>
</dbReference>
<dbReference type="VEuPathDB" id="HostDB:ENSMUSG00000094553"/>
<dbReference type="eggNOG" id="ENOG502SNRJ">
    <property type="taxonomic scope" value="Eukaryota"/>
</dbReference>
<dbReference type="GeneTree" id="ENSGT01030000234553"/>
<dbReference type="HOGENOM" id="CLU_058641_0_0_1"/>
<dbReference type="InParanoid" id="Q9EP51"/>
<dbReference type="OMA" id="VWHKETK"/>
<dbReference type="OrthoDB" id="9620038at2759"/>
<dbReference type="PhylomeDB" id="Q9EP51"/>
<dbReference type="BioGRID-ORCS" id="113852">
    <property type="hits" value="2 hits in 41 CRISPR screens"/>
</dbReference>
<dbReference type="PRO" id="PR:Q9EP51"/>
<dbReference type="Proteomes" id="UP000000589">
    <property type="component" value="Chromosome 6"/>
</dbReference>
<dbReference type="RNAct" id="Q9EP51">
    <property type="molecule type" value="protein"/>
</dbReference>
<dbReference type="Bgee" id="ENSMUSG00000094553">
    <property type="expression patterns" value="Expressed in nucleus of brain and 9 other cell types or tissues"/>
</dbReference>
<dbReference type="GO" id="GO:0005886">
    <property type="term" value="C:plasma membrane"/>
    <property type="evidence" value="ECO:0007669"/>
    <property type="project" value="UniProtKB-SubCell"/>
</dbReference>
<dbReference type="GO" id="GO:0016503">
    <property type="term" value="F:pheromone receptor activity"/>
    <property type="evidence" value="ECO:0007669"/>
    <property type="project" value="InterPro"/>
</dbReference>
<dbReference type="GO" id="GO:0019236">
    <property type="term" value="P:response to pheromone"/>
    <property type="evidence" value="ECO:0007669"/>
    <property type="project" value="UniProtKB-KW"/>
</dbReference>
<dbReference type="GO" id="GO:0007606">
    <property type="term" value="P:sensory perception of chemical stimulus"/>
    <property type="evidence" value="ECO:0000304"/>
    <property type="project" value="MGI"/>
</dbReference>
<dbReference type="CDD" id="cd13949">
    <property type="entry name" value="7tm_V1R_pheromone"/>
    <property type="match status" value="1"/>
</dbReference>
<dbReference type="FunFam" id="1.20.1070.10:FF:000051">
    <property type="entry name" value="Vomeronasal type-1 receptor"/>
    <property type="match status" value="1"/>
</dbReference>
<dbReference type="Gene3D" id="1.20.1070.10">
    <property type="entry name" value="Rhodopsin 7-helix transmembrane proteins"/>
    <property type="match status" value="1"/>
</dbReference>
<dbReference type="InterPro" id="IPR017452">
    <property type="entry name" value="GPCR_Rhodpsn_7TM"/>
</dbReference>
<dbReference type="InterPro" id="IPR004072">
    <property type="entry name" value="Vmron_rcpt_1"/>
</dbReference>
<dbReference type="PANTHER" id="PTHR24062">
    <property type="entry name" value="VOMERONASAL TYPE-1 RECEPTOR"/>
    <property type="match status" value="1"/>
</dbReference>
<dbReference type="Pfam" id="PF03402">
    <property type="entry name" value="V1R"/>
    <property type="match status" value="1"/>
</dbReference>
<dbReference type="PRINTS" id="PR01534">
    <property type="entry name" value="VOMERONASL1R"/>
</dbReference>
<dbReference type="SUPFAM" id="SSF81321">
    <property type="entry name" value="Family A G protein-coupled receptor-like"/>
    <property type="match status" value="1"/>
</dbReference>
<dbReference type="PROSITE" id="PS50262">
    <property type="entry name" value="G_PROTEIN_RECEP_F1_2"/>
    <property type="match status" value="1"/>
</dbReference>
<accession>Q9EP51</accession>
<accession>Q8VIC3</accession>
<protein>
    <recommendedName>
        <fullName>Vomeronasal type-1 receptor 50</fullName>
    </recommendedName>
    <alternativeName>
        <fullName>Pheromone receptor VN2</fullName>
    </alternativeName>
    <alternativeName>
        <fullName>Vomeronasal receptor 2</fullName>
    </alternativeName>
    <alternativeName>
        <fullName>Vomeronasal type-1 receptor A5</fullName>
    </alternativeName>
    <alternativeName>
        <fullName>Vomeronasal type-1 receptor B1</fullName>
    </alternativeName>
</protein>
<organism>
    <name type="scientific">Mus musculus</name>
    <name type="common">Mouse</name>
    <dbReference type="NCBI Taxonomy" id="10090"/>
    <lineage>
        <taxon>Eukaryota</taxon>
        <taxon>Metazoa</taxon>
        <taxon>Chordata</taxon>
        <taxon>Craniata</taxon>
        <taxon>Vertebrata</taxon>
        <taxon>Euteleostomi</taxon>
        <taxon>Mammalia</taxon>
        <taxon>Eutheria</taxon>
        <taxon>Euarchontoglires</taxon>
        <taxon>Glires</taxon>
        <taxon>Rodentia</taxon>
        <taxon>Myomorpha</taxon>
        <taxon>Muroidea</taxon>
        <taxon>Muridae</taxon>
        <taxon>Murinae</taxon>
        <taxon>Mus</taxon>
        <taxon>Mus</taxon>
    </lineage>
</organism>